<keyword id="KW-0010">Activator</keyword>
<keyword id="KW-0539">Nucleus</keyword>
<keyword id="KW-1185">Reference proteome</keyword>
<keyword id="KW-0804">Transcription</keyword>
<keyword id="KW-0805">Transcription regulation</keyword>
<accession>Q6FP10</accession>
<proteinExistence type="inferred from homology"/>
<name>MED16_CANGA</name>
<sequence>MCELNNKRVSWSKTGLIAYADEQSTYGNLCISFLETINGVNCRFHPPQRYVIHPQLHEVPLKTETGNGINGASGSSTAQSNIHGTTSVPGSAGKHQHQFFYDISSIHWNNWFSLPGDMLAVCDELGNMTMLIAGQSPDGPTTLDKLTMLFQDNVYKIHNHVMQLEPERENTDSKLERKKTKKEYNTTILDFHWLSSSKPVIVSQFCAFDSSINMYRNKAQQLSPHGIFHPPFMKYAGLAIRRNGQLDFWYQFSNSKDHKKITLQLFNPHNERSKGLDFLQYAKITSVNNDNSILITTYSRLTGKLSFYKLFVDWNVNTAKPVVLNDPSLKIKHILDATVDQTDDEGRILDFTHVHVLAKVVAEKDAAPEVLLAYDVVGTPESLIKRFKLGQVRLPLDYLGILKPELNTSNENHNQALRSNRSNLRFLGVLNLHHKVASISSEVLDGFVSFYYRNGEIEIYNQNDWKLETERLLNQGPQGKFSNIITSILSAGFKYPTIKNLGTVEWIRVSPAMAGILYKYRHDDLPQFQPMNIDDVSDKSKDEINAATMAFGYVTSAHRQLSGEDIALACKQHILKIAKIDEKRAKDFTTTLMFNLYNFFNFSPGAPKELMDKIISSRPLQKVMLLQLELGSIFTDENTCEMARVILYLKNVSFAFNGVARNLQFAIEQMTNSTNSSNPPLSGDKFFQTAFSKQDLVHSLIPVTKWFVKFITYLIQQILILTNDPENPDNRLVLGVFGAKIPRTLILTILKEIKNVTAIITKFPETNYPILNESSTYLKMLLIESPINFEKFETFLMDVNNKLSAFSEQQPSIMREPTLLVRSSVPNELNKITEFLLQYSSNTVISHADASAIYFSDTSGLRISCDEFFEPGVHRLLQPIEDGIVIDEKNMPATFRDSKTFTKLTYDGITYDRFSKEELSDNKLKRCNRCGAVTKAGYPIPTNKTIVPTSISTRRWPTMYTRMCICLGMLYEL</sequence>
<evidence type="ECO:0000250" key="1"/>
<evidence type="ECO:0000305" key="2"/>
<dbReference type="EMBL" id="CR380956">
    <property type="protein sequence ID" value="CAG60985.1"/>
    <property type="molecule type" value="Genomic_DNA"/>
</dbReference>
<dbReference type="RefSeq" id="XP_448034.1">
    <property type="nucleotide sequence ID" value="XM_448034.1"/>
</dbReference>
<dbReference type="SMR" id="Q6FP10"/>
<dbReference type="FunCoup" id="Q6FP10">
    <property type="interactions" value="314"/>
</dbReference>
<dbReference type="STRING" id="284593.Q6FP10"/>
<dbReference type="EnsemblFungi" id="CAGL0J07524g-T">
    <property type="protein sequence ID" value="CAGL0J07524g-T-p1"/>
    <property type="gene ID" value="CAGL0J07524g"/>
</dbReference>
<dbReference type="KEGG" id="cgr:2889597"/>
<dbReference type="CGD" id="CAL0132966">
    <property type="gene designation" value="MED16"/>
</dbReference>
<dbReference type="VEuPathDB" id="FungiDB:B1J91_J07524g"/>
<dbReference type="VEuPathDB" id="FungiDB:CAGL0J07524g"/>
<dbReference type="eggNOG" id="ENOG502QWAC">
    <property type="taxonomic scope" value="Eukaryota"/>
</dbReference>
<dbReference type="HOGENOM" id="CLU_311703_0_0_1"/>
<dbReference type="InParanoid" id="Q6FP10"/>
<dbReference type="OMA" id="IACKTHL"/>
<dbReference type="Proteomes" id="UP000002428">
    <property type="component" value="Chromosome J"/>
</dbReference>
<dbReference type="GO" id="GO:0070847">
    <property type="term" value="C:core mediator complex"/>
    <property type="evidence" value="ECO:0007669"/>
    <property type="project" value="EnsemblFungi"/>
</dbReference>
<dbReference type="GO" id="GO:0016592">
    <property type="term" value="C:mediator complex"/>
    <property type="evidence" value="ECO:0007669"/>
    <property type="project" value="EnsemblFungi"/>
</dbReference>
<dbReference type="GO" id="GO:0061629">
    <property type="term" value="F:RNA polymerase II-specific DNA-binding transcription factor binding"/>
    <property type="evidence" value="ECO:0007669"/>
    <property type="project" value="EnsemblFungi"/>
</dbReference>
<dbReference type="GO" id="GO:0034605">
    <property type="term" value="P:cellular response to heat"/>
    <property type="evidence" value="ECO:0007669"/>
    <property type="project" value="EnsemblFungi"/>
</dbReference>
<dbReference type="GO" id="GO:0033554">
    <property type="term" value="P:cellular response to stress"/>
    <property type="evidence" value="ECO:0000315"/>
    <property type="project" value="CGD"/>
</dbReference>
<dbReference type="GO" id="GO:0000122">
    <property type="term" value="P:negative regulation of transcription by RNA polymerase II"/>
    <property type="evidence" value="ECO:0007669"/>
    <property type="project" value="EnsemblFungi"/>
</dbReference>
<dbReference type="GO" id="GO:0032968">
    <property type="term" value="P:positive regulation of transcription elongation by RNA polymerase II"/>
    <property type="evidence" value="ECO:0007669"/>
    <property type="project" value="EnsemblFungi"/>
</dbReference>
<dbReference type="GO" id="GO:0060261">
    <property type="term" value="P:positive regulation of transcription initiation by RNA polymerase II"/>
    <property type="evidence" value="ECO:0007669"/>
    <property type="project" value="EnsemblFungi"/>
</dbReference>
<dbReference type="GO" id="GO:0070202">
    <property type="term" value="P:regulation of establishment of protein localization to chromosome"/>
    <property type="evidence" value="ECO:0007669"/>
    <property type="project" value="EnsemblFungi"/>
</dbReference>
<dbReference type="GO" id="GO:0019216">
    <property type="term" value="P:regulation of lipid metabolic process"/>
    <property type="evidence" value="ECO:0000315"/>
    <property type="project" value="CGD"/>
</dbReference>
<dbReference type="GO" id="GO:0051123">
    <property type="term" value="P:RNA polymerase II preinitiation complex assembly"/>
    <property type="evidence" value="ECO:0007669"/>
    <property type="project" value="EnsemblFungi"/>
</dbReference>
<dbReference type="InterPro" id="IPR048338">
    <property type="entry name" value="Mediator_Med16"/>
</dbReference>
<dbReference type="InterPro" id="IPR048339">
    <property type="entry name" value="Mediator_Med16_C"/>
</dbReference>
<dbReference type="InterPro" id="IPR021665">
    <property type="entry name" value="Mediator_Med16_N"/>
</dbReference>
<dbReference type="PANTHER" id="PTHR13224:SF6">
    <property type="entry name" value="MEDIATOR OF RNA POLYMERASE II TRANSCRIPTION SUBUNIT 16"/>
    <property type="match status" value="1"/>
</dbReference>
<dbReference type="PANTHER" id="PTHR13224">
    <property type="entry name" value="THYROID HORMONE RECEPTOR-ASSOCIATED PROTEIN-RELATED"/>
    <property type="match status" value="1"/>
</dbReference>
<dbReference type="Pfam" id="PF20719">
    <property type="entry name" value="Med16_C"/>
    <property type="match status" value="1"/>
</dbReference>
<dbReference type="Pfam" id="PF11635">
    <property type="entry name" value="Med16_N"/>
    <property type="match status" value="1"/>
</dbReference>
<gene>
    <name type="primary">SIN4</name>
    <name type="synonym">MED16</name>
    <name type="ordered locus">CAGL0J07524g</name>
</gene>
<comment type="function">
    <text evidence="1">Component of the Mediator complex, a coactivator involved in the regulated transcription of nearly all RNA polymerase II-dependent genes. Mediator functions as a bridge to convey information from gene-specific regulatory proteins to the basal RNA polymerase II transcription machinery. Mediator is recruited to promoters by direct interactions with regulatory proteins and serves as a scaffold for the assembly of a functional preinitiation complex with RNA polymerase II and the general transcription factors (By similarity).</text>
</comment>
<comment type="subunit">
    <text evidence="1">Component of the Mediator complex.</text>
</comment>
<comment type="subcellular location">
    <subcellularLocation>
        <location evidence="2">Nucleus</location>
    </subcellularLocation>
</comment>
<comment type="similarity">
    <text evidence="2">Belongs to the Mediator complex subunit 16 family.</text>
</comment>
<feature type="chain" id="PRO_0000307627" description="Mediator of RNA polymerase II transcription subunit 16">
    <location>
        <begin position="1"/>
        <end position="973"/>
    </location>
</feature>
<protein>
    <recommendedName>
        <fullName>Mediator of RNA polymerase II transcription subunit 16</fullName>
    </recommendedName>
    <alternativeName>
        <fullName>Mediator complex subunit 16</fullName>
    </alternativeName>
</protein>
<organism>
    <name type="scientific">Candida glabrata (strain ATCC 2001 / BCRC 20586 / JCM 3761 / NBRC 0622 / NRRL Y-65 / CBS 138)</name>
    <name type="common">Yeast</name>
    <name type="synonym">Nakaseomyces glabratus</name>
    <dbReference type="NCBI Taxonomy" id="284593"/>
    <lineage>
        <taxon>Eukaryota</taxon>
        <taxon>Fungi</taxon>
        <taxon>Dikarya</taxon>
        <taxon>Ascomycota</taxon>
        <taxon>Saccharomycotina</taxon>
        <taxon>Saccharomycetes</taxon>
        <taxon>Saccharomycetales</taxon>
        <taxon>Saccharomycetaceae</taxon>
        <taxon>Nakaseomyces</taxon>
    </lineage>
</organism>
<reference key="1">
    <citation type="journal article" date="2004" name="Nature">
        <title>Genome evolution in yeasts.</title>
        <authorList>
            <person name="Dujon B."/>
            <person name="Sherman D."/>
            <person name="Fischer G."/>
            <person name="Durrens P."/>
            <person name="Casaregola S."/>
            <person name="Lafontaine I."/>
            <person name="de Montigny J."/>
            <person name="Marck C."/>
            <person name="Neuveglise C."/>
            <person name="Talla E."/>
            <person name="Goffard N."/>
            <person name="Frangeul L."/>
            <person name="Aigle M."/>
            <person name="Anthouard V."/>
            <person name="Babour A."/>
            <person name="Barbe V."/>
            <person name="Barnay S."/>
            <person name="Blanchin S."/>
            <person name="Beckerich J.-M."/>
            <person name="Beyne E."/>
            <person name="Bleykasten C."/>
            <person name="Boisrame A."/>
            <person name="Boyer J."/>
            <person name="Cattolico L."/>
            <person name="Confanioleri F."/>
            <person name="de Daruvar A."/>
            <person name="Despons L."/>
            <person name="Fabre E."/>
            <person name="Fairhead C."/>
            <person name="Ferry-Dumazet H."/>
            <person name="Groppi A."/>
            <person name="Hantraye F."/>
            <person name="Hennequin C."/>
            <person name="Jauniaux N."/>
            <person name="Joyet P."/>
            <person name="Kachouri R."/>
            <person name="Kerrest A."/>
            <person name="Koszul R."/>
            <person name="Lemaire M."/>
            <person name="Lesur I."/>
            <person name="Ma L."/>
            <person name="Muller H."/>
            <person name="Nicaud J.-M."/>
            <person name="Nikolski M."/>
            <person name="Oztas S."/>
            <person name="Ozier-Kalogeropoulos O."/>
            <person name="Pellenz S."/>
            <person name="Potier S."/>
            <person name="Richard G.-F."/>
            <person name="Straub M.-L."/>
            <person name="Suleau A."/>
            <person name="Swennen D."/>
            <person name="Tekaia F."/>
            <person name="Wesolowski-Louvel M."/>
            <person name="Westhof E."/>
            <person name="Wirth B."/>
            <person name="Zeniou-Meyer M."/>
            <person name="Zivanovic Y."/>
            <person name="Bolotin-Fukuhara M."/>
            <person name="Thierry A."/>
            <person name="Bouchier C."/>
            <person name="Caudron B."/>
            <person name="Scarpelli C."/>
            <person name="Gaillardin C."/>
            <person name="Weissenbach J."/>
            <person name="Wincker P."/>
            <person name="Souciet J.-L."/>
        </authorList>
    </citation>
    <scope>NUCLEOTIDE SEQUENCE [LARGE SCALE GENOMIC DNA]</scope>
    <source>
        <strain>ATCC 2001 / BCRC 20586 / JCM 3761 / NBRC 0622 / NRRL Y-65 / CBS 138</strain>
    </source>
</reference>